<reference key="1">
    <citation type="submission" date="2008-10" db="EMBL/GenBank/DDBJ databases">
        <title>Genome sequence of Bacillus cereus B4264.</title>
        <authorList>
            <person name="Dodson R.J."/>
            <person name="Durkin A.S."/>
            <person name="Rosovitz M.J."/>
            <person name="Rasko D.A."/>
            <person name="Hoffmaster A."/>
            <person name="Ravel J."/>
            <person name="Sutton G."/>
        </authorList>
    </citation>
    <scope>NUCLEOTIDE SEQUENCE [LARGE SCALE GENOMIC DNA]</scope>
    <source>
        <strain>B4264</strain>
    </source>
</reference>
<organism>
    <name type="scientific">Bacillus cereus (strain B4264)</name>
    <dbReference type="NCBI Taxonomy" id="405532"/>
    <lineage>
        <taxon>Bacteria</taxon>
        <taxon>Bacillati</taxon>
        <taxon>Bacillota</taxon>
        <taxon>Bacilli</taxon>
        <taxon>Bacillales</taxon>
        <taxon>Bacillaceae</taxon>
        <taxon>Bacillus</taxon>
        <taxon>Bacillus cereus group</taxon>
    </lineage>
</organism>
<sequence length="786" mass="88202">MLERTLRVLEYNKVKEQLLEHTASSLGRDKVKHLVPSTDFEEIVEMQDTTDEAAKVIRLKGSAPLGGITDIRSNVKRAKIGSMLSPNELLDIANTMYGSRNMKRFIEDMADNGVELPILETHVAQIVSLYDLEKKITNCIGDGGEVVDSASDKLRGIRTQIRTAESRIREKLENMTRSSNAQKMLSDSIVTIRNERYVIPVKQEYRGVYGGIVHDQSASGQTLFIEPQVIVELNNALQEARVKEKQEIERILLMLTEEVAVEADIVLSNVEVVANLDFIFAKAFYAKRIKATKPIVNNERYMDLRQARHPLIDPEIIVPNNIMLGKDFTTIVITGPNTGGKTVTLKTVGICVLMAQSGLHIPVMDESEICVFKNIFADIGDEQSIEQSLSTFSSHMVNIVDILEKADFESLVLFDELGAGTDPQEGAALAISILDEVCNRGARVVATTHYPELKAYGYNREQVINASVEFDVNTLSPTYKLLIGVPGRSNAFEISKRLGLSDRVIEQARNHISTDTNKIENMIAKLEESQKNAERDWNEAEALRKQSEKLHRELQRQIIEFNEDRDERLLKAQKEGEEKVEAAKKEAEGIIQELRQLRKAQLANVKDHELIEAKSRLEGAAPELVKKQKVNVKNTAPKQQLRAGDEVKVLTFGQKGQLLEKVSDTEWSVQIGILKMKVKESNMEYINTPKQTEKKAVATVKGRDYHVSLELDLRGERFENAMARVEKYLDDAQLASYPRVSIIHGKGTGALRQGVQDYLKKHRGVKTFRYGDMGEGGLGVTVVELK</sequence>
<feature type="chain" id="PRO_1000117226" description="Endonuclease MutS2">
    <location>
        <begin position="1"/>
        <end position="786"/>
    </location>
</feature>
<feature type="domain" description="Smr" evidence="1">
    <location>
        <begin position="711"/>
        <end position="786"/>
    </location>
</feature>
<feature type="binding site" evidence="1">
    <location>
        <begin position="335"/>
        <end position="342"/>
    </location>
    <ligand>
        <name>ATP</name>
        <dbReference type="ChEBI" id="CHEBI:30616"/>
    </ligand>
</feature>
<gene>
    <name evidence="1" type="primary">mutS2</name>
    <name evidence="1" type="synonym">rqcU</name>
    <name type="ordered locus">BCB4264_A4662</name>
</gene>
<accession>B7HF67</accession>
<dbReference type="EC" id="3.1.-.-" evidence="1"/>
<dbReference type="EC" id="3.6.4.-" evidence="1"/>
<dbReference type="EMBL" id="CP001176">
    <property type="protein sequence ID" value="ACK61406.1"/>
    <property type="molecule type" value="Genomic_DNA"/>
</dbReference>
<dbReference type="RefSeq" id="WP_000893715.1">
    <property type="nucleotide sequence ID" value="NZ_VEHB01000006.1"/>
</dbReference>
<dbReference type="SMR" id="B7HF67"/>
<dbReference type="KEGG" id="bcb:BCB4264_A4662"/>
<dbReference type="HOGENOM" id="CLU_011252_2_1_9"/>
<dbReference type="Proteomes" id="UP000007096">
    <property type="component" value="Chromosome"/>
</dbReference>
<dbReference type="GO" id="GO:0005524">
    <property type="term" value="F:ATP binding"/>
    <property type="evidence" value="ECO:0007669"/>
    <property type="project" value="UniProtKB-UniRule"/>
</dbReference>
<dbReference type="GO" id="GO:0016887">
    <property type="term" value="F:ATP hydrolysis activity"/>
    <property type="evidence" value="ECO:0007669"/>
    <property type="project" value="InterPro"/>
</dbReference>
<dbReference type="GO" id="GO:0140664">
    <property type="term" value="F:ATP-dependent DNA damage sensor activity"/>
    <property type="evidence" value="ECO:0007669"/>
    <property type="project" value="InterPro"/>
</dbReference>
<dbReference type="GO" id="GO:0004519">
    <property type="term" value="F:endonuclease activity"/>
    <property type="evidence" value="ECO:0007669"/>
    <property type="project" value="UniProtKB-UniRule"/>
</dbReference>
<dbReference type="GO" id="GO:0030983">
    <property type="term" value="F:mismatched DNA binding"/>
    <property type="evidence" value="ECO:0007669"/>
    <property type="project" value="InterPro"/>
</dbReference>
<dbReference type="GO" id="GO:0043023">
    <property type="term" value="F:ribosomal large subunit binding"/>
    <property type="evidence" value="ECO:0007669"/>
    <property type="project" value="UniProtKB-UniRule"/>
</dbReference>
<dbReference type="GO" id="GO:0019843">
    <property type="term" value="F:rRNA binding"/>
    <property type="evidence" value="ECO:0007669"/>
    <property type="project" value="UniProtKB-UniRule"/>
</dbReference>
<dbReference type="GO" id="GO:0006298">
    <property type="term" value="P:mismatch repair"/>
    <property type="evidence" value="ECO:0007669"/>
    <property type="project" value="InterPro"/>
</dbReference>
<dbReference type="GO" id="GO:0045910">
    <property type="term" value="P:negative regulation of DNA recombination"/>
    <property type="evidence" value="ECO:0007669"/>
    <property type="project" value="InterPro"/>
</dbReference>
<dbReference type="GO" id="GO:0072344">
    <property type="term" value="P:rescue of stalled ribosome"/>
    <property type="evidence" value="ECO:0007669"/>
    <property type="project" value="UniProtKB-UniRule"/>
</dbReference>
<dbReference type="CDD" id="cd03280">
    <property type="entry name" value="ABC_MutS2"/>
    <property type="match status" value="1"/>
</dbReference>
<dbReference type="CDD" id="cd06503">
    <property type="entry name" value="ATP-synt_Fo_b"/>
    <property type="match status" value="1"/>
</dbReference>
<dbReference type="FunFam" id="3.40.50.300:FF:000830">
    <property type="entry name" value="Endonuclease MutS2"/>
    <property type="match status" value="1"/>
</dbReference>
<dbReference type="Gene3D" id="1.10.1420.10">
    <property type="match status" value="2"/>
</dbReference>
<dbReference type="Gene3D" id="3.30.1370.110">
    <property type="match status" value="1"/>
</dbReference>
<dbReference type="Gene3D" id="3.40.50.300">
    <property type="entry name" value="P-loop containing nucleotide triphosphate hydrolases"/>
    <property type="match status" value="1"/>
</dbReference>
<dbReference type="HAMAP" id="MF_00092">
    <property type="entry name" value="MutS2"/>
    <property type="match status" value="1"/>
</dbReference>
<dbReference type="InterPro" id="IPR000432">
    <property type="entry name" value="DNA_mismatch_repair_MutS_C"/>
</dbReference>
<dbReference type="InterPro" id="IPR007696">
    <property type="entry name" value="DNA_mismatch_repair_MutS_core"/>
</dbReference>
<dbReference type="InterPro" id="IPR036187">
    <property type="entry name" value="DNA_mismatch_repair_MutS_sf"/>
</dbReference>
<dbReference type="InterPro" id="IPR046893">
    <property type="entry name" value="MSSS"/>
</dbReference>
<dbReference type="InterPro" id="IPR045076">
    <property type="entry name" value="MutS"/>
</dbReference>
<dbReference type="InterPro" id="IPR005747">
    <property type="entry name" value="MutS2"/>
</dbReference>
<dbReference type="InterPro" id="IPR027417">
    <property type="entry name" value="P-loop_NTPase"/>
</dbReference>
<dbReference type="InterPro" id="IPR002625">
    <property type="entry name" value="Smr_dom"/>
</dbReference>
<dbReference type="InterPro" id="IPR036063">
    <property type="entry name" value="Smr_dom_sf"/>
</dbReference>
<dbReference type="NCBIfam" id="TIGR01069">
    <property type="entry name" value="mutS2"/>
    <property type="match status" value="1"/>
</dbReference>
<dbReference type="PANTHER" id="PTHR48466:SF2">
    <property type="entry name" value="OS10G0509000 PROTEIN"/>
    <property type="match status" value="1"/>
</dbReference>
<dbReference type="PANTHER" id="PTHR48466">
    <property type="entry name" value="OS10G0509000 PROTEIN-RELATED"/>
    <property type="match status" value="1"/>
</dbReference>
<dbReference type="Pfam" id="PF20297">
    <property type="entry name" value="MSSS"/>
    <property type="match status" value="1"/>
</dbReference>
<dbReference type="Pfam" id="PF00488">
    <property type="entry name" value="MutS_V"/>
    <property type="match status" value="1"/>
</dbReference>
<dbReference type="Pfam" id="PF01713">
    <property type="entry name" value="Smr"/>
    <property type="match status" value="1"/>
</dbReference>
<dbReference type="PIRSF" id="PIRSF005814">
    <property type="entry name" value="MutS_YshD"/>
    <property type="match status" value="1"/>
</dbReference>
<dbReference type="SMART" id="SM00534">
    <property type="entry name" value="MUTSac"/>
    <property type="match status" value="1"/>
</dbReference>
<dbReference type="SMART" id="SM00533">
    <property type="entry name" value="MUTSd"/>
    <property type="match status" value="1"/>
</dbReference>
<dbReference type="SMART" id="SM00463">
    <property type="entry name" value="SMR"/>
    <property type="match status" value="1"/>
</dbReference>
<dbReference type="SUPFAM" id="SSF48334">
    <property type="entry name" value="DNA repair protein MutS, domain III"/>
    <property type="match status" value="1"/>
</dbReference>
<dbReference type="SUPFAM" id="SSF52540">
    <property type="entry name" value="P-loop containing nucleoside triphosphate hydrolases"/>
    <property type="match status" value="1"/>
</dbReference>
<dbReference type="SUPFAM" id="SSF160443">
    <property type="entry name" value="SMR domain-like"/>
    <property type="match status" value="1"/>
</dbReference>
<dbReference type="PROSITE" id="PS00486">
    <property type="entry name" value="DNA_MISMATCH_REPAIR_2"/>
    <property type="match status" value="1"/>
</dbReference>
<dbReference type="PROSITE" id="PS50828">
    <property type="entry name" value="SMR"/>
    <property type="match status" value="1"/>
</dbReference>
<comment type="function">
    <text evidence="1">Endonuclease that is involved in the suppression of homologous recombination and thus may have a key role in the control of bacterial genetic diversity.</text>
</comment>
<comment type="function">
    <text evidence="1">Acts as a ribosome collision sensor, splitting the ribosome into its 2 subunits. Detects stalled/collided 70S ribosomes which it binds and splits by an ATP-hydrolysis driven conformational change. Acts upstream of the ribosome quality control system (RQC), a ribosome-associated complex that mediates the extraction of incompletely synthesized nascent chains from stalled ribosomes and their subsequent degradation. Probably generates substrates for RQC.</text>
</comment>
<comment type="subunit">
    <text evidence="1">Homodimer. Binds to stalled ribosomes, contacting rRNA.</text>
</comment>
<comment type="similarity">
    <text evidence="1">Belongs to the DNA mismatch repair MutS family. MutS2 subfamily.</text>
</comment>
<name>MUTS2_BACC4</name>
<keyword id="KW-0067">ATP-binding</keyword>
<keyword id="KW-0238">DNA-binding</keyword>
<keyword id="KW-0255">Endonuclease</keyword>
<keyword id="KW-0378">Hydrolase</keyword>
<keyword id="KW-0540">Nuclease</keyword>
<keyword id="KW-0547">Nucleotide-binding</keyword>
<keyword id="KW-0694">RNA-binding</keyword>
<keyword id="KW-0699">rRNA-binding</keyword>
<protein>
    <recommendedName>
        <fullName evidence="1">Endonuclease MutS2</fullName>
        <ecNumber evidence="1">3.1.-.-</ecNumber>
    </recommendedName>
    <alternativeName>
        <fullName evidence="1">Ribosome-associated protein quality control-upstream factor</fullName>
        <shortName evidence="1">RQC-upstream factor</shortName>
        <shortName evidence="1">RqcU</shortName>
        <ecNumber evidence="1">3.6.4.-</ecNumber>
    </alternativeName>
</protein>
<proteinExistence type="inferred from homology"/>
<evidence type="ECO:0000255" key="1">
    <source>
        <dbReference type="HAMAP-Rule" id="MF_00092"/>
    </source>
</evidence>